<accession>P59647</accession>
<accession>Q6P9W0</accession>
<dbReference type="EMBL" id="BC060571">
    <property type="protein sequence ID" value="AAH60571.1"/>
    <property type="molecule type" value="mRNA"/>
</dbReference>
<dbReference type="RefSeq" id="NP_001257617.1">
    <property type="nucleotide sequence ID" value="NM_001270688.1"/>
</dbReference>
<dbReference type="RefSeq" id="NP_001257618.1">
    <property type="nucleotide sequence ID" value="NM_001270689.1"/>
</dbReference>
<dbReference type="RefSeq" id="NP_068709.2">
    <property type="nucleotide sequence ID" value="NM_021909.2"/>
</dbReference>
<dbReference type="FunCoup" id="P59647">
    <property type="interactions" value="36"/>
</dbReference>
<dbReference type="STRING" id="10116.ENSRNOP00000028597"/>
<dbReference type="PhosphoSitePlus" id="P59647"/>
<dbReference type="PaxDb" id="10116-ENSRNOP00000028597"/>
<dbReference type="GeneID" id="60338"/>
<dbReference type="KEGG" id="rno:60338"/>
<dbReference type="AGR" id="RGD:620827"/>
<dbReference type="CTD" id="53827"/>
<dbReference type="RGD" id="620827">
    <property type="gene designation" value="Fxyd5"/>
</dbReference>
<dbReference type="VEuPathDB" id="HostDB:ENSRNOG00000021062"/>
<dbReference type="eggNOG" id="ENOG502TDJN">
    <property type="taxonomic scope" value="Eukaryota"/>
</dbReference>
<dbReference type="HOGENOM" id="CLU_109413_0_0_1"/>
<dbReference type="InParanoid" id="P59647"/>
<dbReference type="OrthoDB" id="83065at9989"/>
<dbReference type="PhylomeDB" id="P59647"/>
<dbReference type="TreeFam" id="TF338182"/>
<dbReference type="PRO" id="PR:P59647"/>
<dbReference type="Proteomes" id="UP000002494">
    <property type="component" value="Chromosome 1"/>
</dbReference>
<dbReference type="Bgee" id="ENSRNOG00000021062">
    <property type="expression patterns" value="Expressed in spleen and 20 other cell types or tissues"/>
</dbReference>
<dbReference type="GO" id="GO:0016323">
    <property type="term" value="C:basolateral plasma membrane"/>
    <property type="evidence" value="ECO:0007669"/>
    <property type="project" value="UniProtKB-SubCell"/>
</dbReference>
<dbReference type="GO" id="GO:0016020">
    <property type="term" value="C:membrane"/>
    <property type="evidence" value="ECO:0000266"/>
    <property type="project" value="RGD"/>
</dbReference>
<dbReference type="GO" id="GO:0005886">
    <property type="term" value="C:plasma membrane"/>
    <property type="evidence" value="ECO:0000250"/>
    <property type="project" value="UniProtKB"/>
</dbReference>
<dbReference type="GO" id="GO:0003779">
    <property type="term" value="F:actin binding"/>
    <property type="evidence" value="ECO:0000266"/>
    <property type="project" value="RGD"/>
</dbReference>
<dbReference type="GO" id="GO:0045296">
    <property type="term" value="F:cadherin binding"/>
    <property type="evidence" value="ECO:0000266"/>
    <property type="project" value="RGD"/>
</dbReference>
<dbReference type="GO" id="GO:0099106">
    <property type="term" value="F:ion channel regulator activity"/>
    <property type="evidence" value="ECO:0000266"/>
    <property type="project" value="RGD"/>
</dbReference>
<dbReference type="GO" id="GO:0015459">
    <property type="term" value="F:potassium channel regulator activity"/>
    <property type="evidence" value="ECO:0000266"/>
    <property type="project" value="RGD"/>
</dbReference>
<dbReference type="GO" id="GO:0017080">
    <property type="term" value="F:sodium channel regulator activity"/>
    <property type="evidence" value="ECO:0000250"/>
    <property type="project" value="UniProtKB"/>
</dbReference>
<dbReference type="GO" id="GO:1903278">
    <property type="term" value="P:positive regulation of sodium ion export across plasma membrane"/>
    <property type="evidence" value="ECO:0000318"/>
    <property type="project" value="GO_Central"/>
</dbReference>
<dbReference type="GO" id="GO:0006813">
    <property type="term" value="P:potassium ion transport"/>
    <property type="evidence" value="ECO:0007669"/>
    <property type="project" value="UniProtKB-KW"/>
</dbReference>
<dbReference type="GO" id="GO:0006814">
    <property type="term" value="P:sodium ion transport"/>
    <property type="evidence" value="ECO:0007669"/>
    <property type="project" value="UniProtKB-KW"/>
</dbReference>
<dbReference type="CDD" id="cd20323">
    <property type="entry name" value="FXYD_FXYD5"/>
    <property type="match status" value="1"/>
</dbReference>
<dbReference type="FunFam" id="1.20.5.780:FF:000005">
    <property type="entry name" value="FXYD domain-containing ion transport regulator"/>
    <property type="match status" value="1"/>
</dbReference>
<dbReference type="Gene3D" id="1.20.5.780">
    <property type="entry name" value="Single helix bin"/>
    <property type="match status" value="1"/>
</dbReference>
<dbReference type="InterPro" id="IPR047297">
    <property type="entry name" value="FXYD_motif"/>
</dbReference>
<dbReference type="InterPro" id="IPR000272">
    <property type="entry name" value="Ion-transport_regulator_FXYD"/>
</dbReference>
<dbReference type="PANTHER" id="PTHR14132:SF14">
    <property type="entry name" value="FXYD DOMAIN-CONTAINING ION TRANSPORT REGULATOR 5"/>
    <property type="match status" value="1"/>
</dbReference>
<dbReference type="PANTHER" id="PTHR14132">
    <property type="entry name" value="SODIUM/POTASSIUM-TRANSPORTING ATPASE SUBUNIT GAMMA"/>
    <property type="match status" value="1"/>
</dbReference>
<dbReference type="Pfam" id="PF02038">
    <property type="entry name" value="ATP1G1_PLM_MAT8"/>
    <property type="match status" value="1"/>
</dbReference>
<dbReference type="PROSITE" id="PS01310">
    <property type="entry name" value="FXYD"/>
    <property type="match status" value="1"/>
</dbReference>
<organism>
    <name type="scientific">Rattus norvegicus</name>
    <name type="common">Rat</name>
    <dbReference type="NCBI Taxonomy" id="10116"/>
    <lineage>
        <taxon>Eukaryota</taxon>
        <taxon>Metazoa</taxon>
        <taxon>Chordata</taxon>
        <taxon>Craniata</taxon>
        <taxon>Vertebrata</taxon>
        <taxon>Euteleostomi</taxon>
        <taxon>Mammalia</taxon>
        <taxon>Eutheria</taxon>
        <taxon>Euarchontoglires</taxon>
        <taxon>Glires</taxon>
        <taxon>Rodentia</taxon>
        <taxon>Myomorpha</taxon>
        <taxon>Muroidea</taxon>
        <taxon>Muridae</taxon>
        <taxon>Murinae</taxon>
        <taxon>Rattus</taxon>
    </lineage>
</organism>
<protein>
    <recommendedName>
        <fullName>FXYD domain-containing ion transport regulator 5</fullName>
    </recommendedName>
</protein>
<gene>
    <name type="primary">Fxyd5</name>
</gene>
<name>FXYD5_RAT</name>
<reference key="1">
    <citation type="journal article" date="2004" name="Genome Res.">
        <title>The status, quality, and expansion of the NIH full-length cDNA project: the Mammalian Gene Collection (MGC).</title>
        <authorList>
            <consortium name="The MGC Project Team"/>
        </authorList>
    </citation>
    <scope>NUCLEOTIDE SEQUENCE [LARGE SCALE MRNA]</scope>
    <source>
        <tissue>Pituitary</tissue>
    </source>
</reference>
<reference key="2">
    <citation type="journal article" date="2000" name="Genomics">
        <title>The FXYD gene family of small ion transport regulators or channels: cDNA sequence, protein signature sequence, and expression.</title>
        <authorList>
            <person name="Sweadner K.J."/>
            <person name="Rael E."/>
        </authorList>
    </citation>
    <scope>IDENTIFICATION</scope>
</reference>
<feature type="signal peptide" evidence="1">
    <location>
        <begin position="1"/>
        <end position="21"/>
    </location>
</feature>
<feature type="chain" id="PRO_0000010371" description="FXYD domain-containing ion transport regulator 5">
    <location>
        <begin position="22"/>
        <end position="178"/>
    </location>
</feature>
<feature type="topological domain" description="Extracellular" evidence="3">
    <location>
        <begin position="22"/>
        <end position="146"/>
    </location>
</feature>
<feature type="transmembrane region" description="Helical" evidence="3">
    <location>
        <begin position="147"/>
        <end position="164"/>
    </location>
</feature>
<feature type="topological domain" description="Cytoplasmic" evidence="3">
    <location>
        <begin position="165"/>
        <end position="178"/>
    </location>
</feature>
<feature type="region of interest" description="Disordered" evidence="4">
    <location>
        <begin position="21"/>
        <end position="126"/>
    </location>
</feature>
<feature type="compositionally biased region" description="Polar residues" evidence="4">
    <location>
        <begin position="29"/>
        <end position="58"/>
    </location>
</feature>
<feature type="compositionally biased region" description="Low complexity" evidence="4">
    <location>
        <begin position="70"/>
        <end position="79"/>
    </location>
</feature>
<keyword id="KW-1003">Cell membrane</keyword>
<keyword id="KW-0406">Ion transport</keyword>
<keyword id="KW-0472">Membrane</keyword>
<keyword id="KW-0630">Potassium</keyword>
<keyword id="KW-0633">Potassium transport</keyword>
<keyword id="KW-1185">Reference proteome</keyword>
<keyword id="KW-0732">Signal</keyword>
<keyword id="KW-0915">Sodium</keyword>
<keyword id="KW-0739">Sodium transport</keyword>
<keyword id="KW-0740">Sodium/potassium transport</keyword>
<keyword id="KW-0812">Transmembrane</keyword>
<keyword id="KW-1133">Transmembrane helix</keyword>
<keyword id="KW-0813">Transport</keyword>
<proteinExistence type="evidence at transcript level"/>
<comment type="function">
    <text evidence="1 2">Associates with and regulates the activity of the sodium/potassium-transporting ATPase (NKA) which catalyzes the hydrolysis of ATP coupled with the exchange of Na(+) and K(+) ions across the plasma membrane (By similarity). May increase NKA activity by increasing the apparent affinity for Na(+). Involved in down-regulation of E-cadherin which results in reduced cell adhesion. Promotes metastasis (By similarity).</text>
</comment>
<comment type="subunit">
    <text evidence="1">Regulatory subunit of the sodium/potassium-transporting ATPase which is composed of a catalytic alpha subunit, a non-catalytic beta subunit and an additional regulatory subunit. The regulatory subunit, a member of the FXYD protein family, modulates the enzymatic activity in a tissue- and isoform-specific way by changing affinities of the Na+/K+-ATPase toward Na(+), K(+) or ATP.</text>
</comment>
<comment type="subcellular location">
    <subcellularLocation>
        <location evidence="1">Cell membrane</location>
        <topology evidence="1">Single-pass type I membrane protein</topology>
    </subcellularLocation>
    <subcellularLocation>
        <location evidence="1">Basolateral cell membrane</location>
        <topology evidence="1">Single-pass type I membrane protein</topology>
    </subcellularLocation>
    <text evidence="1">In kidneys localizes to the basolateral membrane of the connecting tubule.</text>
</comment>
<comment type="tissue specificity">
    <text>Spleen, lung, skeletal muscle, and testis.</text>
</comment>
<comment type="PTM">
    <text evidence="2">Glycosylated.</text>
</comment>
<comment type="similarity">
    <text evidence="5">Belongs to the FXYD family.</text>
</comment>
<sequence>MSPPSQLCLLTIVALILPSEGQTPEKPRSSFTAHQSSVTTHVPVPDQTSPGVQTTPPIWTSEAGEATGSQTAAKTKTQQLTEMATANPVTDPGPLTSSEKGTPALSRIKSPSPPKGYMPPSYIENPLDPNENSPFYYDNTTLRKRGLLVAAVLFITGIIILTSGKCRQFSQLCLNRHR</sequence>
<evidence type="ECO:0000250" key="1">
    <source>
        <dbReference type="UniProtKB" id="P97808"/>
    </source>
</evidence>
<evidence type="ECO:0000250" key="2">
    <source>
        <dbReference type="UniProtKB" id="Q96DB9"/>
    </source>
</evidence>
<evidence type="ECO:0000255" key="3"/>
<evidence type="ECO:0000256" key="4">
    <source>
        <dbReference type="SAM" id="MobiDB-lite"/>
    </source>
</evidence>
<evidence type="ECO:0000305" key="5"/>